<sequence>MEMTNAQRLILSNQYKMMTMLDPANAERYRRLQTIIERGYGLQMRELDREFGELKEETCRTIIDIMEMYHALHVSWSNLQDQQSIDERRVTFLGFDAATEARYLGYVRFMVNVEGRYTHFDAGTHGFNAQTPMWEKYQRMLNVWHACPRQYHLSANEINQIINA</sequence>
<reference key="1">
    <citation type="journal article" date="2008" name="DNA Res.">
        <title>Complete genome sequence and comparative analysis of the wild-type commensal Escherichia coli strain SE11 isolated from a healthy adult.</title>
        <authorList>
            <person name="Oshima K."/>
            <person name="Toh H."/>
            <person name="Ogura Y."/>
            <person name="Sasamoto H."/>
            <person name="Morita H."/>
            <person name="Park S.-H."/>
            <person name="Ooka T."/>
            <person name="Iyoda S."/>
            <person name="Taylor T.D."/>
            <person name="Hayashi T."/>
            <person name="Itoh K."/>
            <person name="Hattori M."/>
        </authorList>
    </citation>
    <scope>NUCLEOTIDE SEQUENCE [LARGE SCALE GENOMIC DNA]</scope>
    <source>
        <strain>SE11</strain>
    </source>
</reference>
<protein>
    <recommendedName>
        <fullName evidence="1">UPF0304 protein YfbU</fullName>
    </recommendedName>
</protein>
<accession>B6I7L6</accession>
<organism>
    <name type="scientific">Escherichia coli (strain SE11)</name>
    <dbReference type="NCBI Taxonomy" id="409438"/>
    <lineage>
        <taxon>Bacteria</taxon>
        <taxon>Pseudomonadati</taxon>
        <taxon>Pseudomonadota</taxon>
        <taxon>Gammaproteobacteria</taxon>
        <taxon>Enterobacterales</taxon>
        <taxon>Enterobacteriaceae</taxon>
        <taxon>Escherichia</taxon>
    </lineage>
</organism>
<name>YFBU_ECOSE</name>
<proteinExistence type="inferred from homology"/>
<evidence type="ECO:0000255" key="1">
    <source>
        <dbReference type="HAMAP-Rule" id="MF_00762"/>
    </source>
</evidence>
<comment type="similarity">
    <text evidence="1">Belongs to the UPF0304 family.</text>
</comment>
<feature type="chain" id="PRO_1000198334" description="UPF0304 protein YfbU">
    <location>
        <begin position="1"/>
        <end position="164"/>
    </location>
</feature>
<gene>
    <name evidence="1" type="primary">yfbU</name>
    <name type="ordered locus">ECSE_2551</name>
</gene>
<dbReference type="EMBL" id="AP009240">
    <property type="protein sequence ID" value="BAG78075.1"/>
    <property type="molecule type" value="Genomic_DNA"/>
</dbReference>
<dbReference type="RefSeq" id="WP_000426124.1">
    <property type="nucleotide sequence ID" value="NC_011415.1"/>
</dbReference>
<dbReference type="SMR" id="B6I7L6"/>
<dbReference type="KEGG" id="ecy:ECSE_2551"/>
<dbReference type="HOGENOM" id="CLU_101021_1_0_6"/>
<dbReference type="Proteomes" id="UP000008199">
    <property type="component" value="Chromosome"/>
</dbReference>
<dbReference type="FunFam" id="1.10.3190.10:FF:000001">
    <property type="entry name" value="UPF0304 protein YfbU"/>
    <property type="match status" value="1"/>
</dbReference>
<dbReference type="Gene3D" id="1.10.287.680">
    <property type="entry name" value="Helix hairpin bin"/>
    <property type="match status" value="1"/>
</dbReference>
<dbReference type="Gene3D" id="1.10.3190.10">
    <property type="entry name" value="yfbu gene product, domain 2"/>
    <property type="match status" value="1"/>
</dbReference>
<dbReference type="HAMAP" id="MF_00762">
    <property type="entry name" value="UPF0304"/>
    <property type="match status" value="1"/>
</dbReference>
<dbReference type="InterPro" id="IPR005587">
    <property type="entry name" value="UPF0304_YfbU"/>
</dbReference>
<dbReference type="InterPro" id="IPR023146">
    <property type="entry name" value="YfbU_alpha-helical_sf"/>
</dbReference>
<dbReference type="InterPro" id="IPR023145">
    <property type="entry name" value="YfbU_helix-hairpin_sf"/>
</dbReference>
<dbReference type="NCBIfam" id="NF003936">
    <property type="entry name" value="PRK05445.1"/>
    <property type="match status" value="1"/>
</dbReference>
<dbReference type="Pfam" id="PF03887">
    <property type="entry name" value="YfbU"/>
    <property type="match status" value="1"/>
</dbReference>
<dbReference type="PIRSF" id="PIRSF006272">
    <property type="entry name" value="UCP006272"/>
    <property type="match status" value="1"/>
</dbReference>
<dbReference type="SUPFAM" id="SSF116960">
    <property type="entry name" value="YfbU-like"/>
    <property type="match status" value="1"/>
</dbReference>